<sequence length="1187" mass="131593">MGRIFEYFVVCGLGPEMRTVDGDLGFHGMQTFYLPALLDQFPPTDQSPYPAPPPQLPTCVLPAGVEFHSSGFVSSDPASFPRSYPIVLTEGDGSKIFVSCIAFRDRVCEDIIEAYRLPPNTYADKCICLVSHAPNFRVLRNSLEEIFVLCFSSEGSCKPLWDIIAYMVSNVPLPTPGKDRVLFAVENCLLSVEAPPEDSLPQADISLQPLVQCLDVDNLIKLFTSVLVERRILIRSNKYSLLTLVSESICHLIYPFRWLQVYIPLLFFSGVDYIDAPTPYMMGLHSDVDTSNLAMDGVVVVDLDINQITTSEEIPQIPEPEFSTLRNDILKLLHPNVVAIDQLKGFGNSVEQCPKSLSKPWGEDHDLQLRVIFLKCFASILGGYRNFIENKVFSTDAFLKRRSRSTNQPPEPMLVQFLGSFAFLDYLERRLSSDEKSTNLLEKLQDAVGRGQDAMSILPKSSMEPEIITIAEPEVEESATRYTYDRFPASVRSEEQEEKRKQILAAASGALESNGRHPPSSPPGKNTKEDNFSSMERAAERERMVLDIQVKLQGLWLRLLKLGSDEDPLSSFEYGTILALIESDAEGIGGSGFIECIREHLYSGWHGQLSEEQFIAVKELLKMAVGRAASRSDLSTVRDALEVSAEMFKKDANNVSDYVQRHLISIPIWEELRFWEGYFEYLMEQPANESVNYATLVTARLIIVASHMAGLGLPDTEAWNMIETIAEKQKLGYKLLIKLRGFLSHVQQLRVGYWGASSFKQQAISAGLPSPRPKDVSVSDETQQPSEASGRSWVQSMFSRDTASRANSFSRVRKWVSDNASSDITAAAQKKIQTNVRVLKGHGGAVTALHSVTRREVCDLVGDREDAGFFISGSTDCLVKIWDPSLRGSELRATLKGHTGTVRAISSDRGKIVSGSDDLSVIVWDKQTTQLLEELKGHDSQVSCVKMLSGERVLTAAHDGTVKMWDVRTDMCVATVGRCSSAILSLEYDDSTGILAAAGRDTVANIWDIRSGKQMHKLKGHTKWIRSIRMVEDTLITGSDDWTARVWSVSRGSCDAVLACHAGPVQSVEYSPFDKGIITGSADGLLRFWENDEGGIKCVKNITLHSSSILSINAGENWLGIGAADNSMSLFHRPSNAGTKVSGWQLYRVPQRTAAVVRCVASDLERKRICSGGRNGVLRLWDATINI</sequence>
<keyword id="KW-0025">Alternative splicing</keyword>
<keyword id="KW-0131">Cell cycle</keyword>
<keyword id="KW-0132">Cell division</keyword>
<keyword id="KW-1003">Cell membrane</keyword>
<keyword id="KW-0968">Cytoplasmic vesicle</keyword>
<keyword id="KW-0341">Growth regulation</keyword>
<keyword id="KW-0472">Membrane</keyword>
<keyword id="KW-1185">Reference proteome</keyword>
<keyword id="KW-0677">Repeat</keyword>
<keyword id="KW-0853">WD repeat</keyword>
<gene>
    <name evidence="7" type="primary">SCD1</name>
    <name evidence="9" type="ordered locus">At1g49040</name>
    <name evidence="10 11" type="ORF">F27J15.16/F27J15.17</name>
</gene>
<dbReference type="EMBL" id="AY082605">
    <property type="protein sequence ID" value="AAL92456.1"/>
    <property type="molecule type" value="mRNA"/>
</dbReference>
<dbReference type="EMBL" id="AC016041">
    <property type="protein sequence ID" value="AAF69702.1"/>
    <property type="status" value="ALT_SEQ"/>
    <property type="molecule type" value="Genomic_DNA"/>
</dbReference>
<dbReference type="EMBL" id="AC016041">
    <property type="protein sequence ID" value="AAF69703.1"/>
    <property type="status" value="ALT_SEQ"/>
    <property type="molecule type" value="Genomic_DNA"/>
</dbReference>
<dbReference type="EMBL" id="CP002684">
    <property type="protein sequence ID" value="AEE32385.1"/>
    <property type="molecule type" value="Genomic_DNA"/>
</dbReference>
<dbReference type="PIR" id="H96527">
    <property type="entry name" value="H96527"/>
</dbReference>
<dbReference type="RefSeq" id="NP_850959.1">
    <molecule id="Q8RXA7-1"/>
    <property type="nucleotide sequence ID" value="NM_180628.4"/>
</dbReference>
<dbReference type="SMR" id="Q8RXA7"/>
<dbReference type="FunCoup" id="Q8RXA7">
    <property type="interactions" value="1890"/>
</dbReference>
<dbReference type="IntAct" id="Q8RXA7">
    <property type="interactions" value="1"/>
</dbReference>
<dbReference type="STRING" id="3702.Q8RXA7"/>
<dbReference type="GlyGen" id="Q8RXA7">
    <property type="glycosylation" value="1 site"/>
</dbReference>
<dbReference type="iPTMnet" id="Q8RXA7"/>
<dbReference type="PaxDb" id="3702-AT1G49040.1"/>
<dbReference type="ProteomicsDB" id="232938">
    <molecule id="Q8RXA7-1"/>
</dbReference>
<dbReference type="EnsemblPlants" id="AT1G49040.1">
    <molecule id="Q8RXA7-1"/>
    <property type="protein sequence ID" value="AT1G49040.1"/>
    <property type="gene ID" value="AT1G49040"/>
</dbReference>
<dbReference type="GeneID" id="841327"/>
<dbReference type="Gramene" id="AT1G49040.1">
    <molecule id="Q8RXA7-1"/>
    <property type="protein sequence ID" value="AT1G49040.1"/>
    <property type="gene ID" value="AT1G49040"/>
</dbReference>
<dbReference type="KEGG" id="ath:AT1G49040"/>
<dbReference type="Araport" id="AT1G49040"/>
<dbReference type="TAIR" id="AT1G49040">
    <property type="gene designation" value="SCD1"/>
</dbReference>
<dbReference type="eggNOG" id="KOG2127">
    <property type="taxonomic scope" value="Eukaryota"/>
</dbReference>
<dbReference type="HOGENOM" id="CLU_007834_0_0_1"/>
<dbReference type="InParanoid" id="Q8RXA7"/>
<dbReference type="PhylomeDB" id="Q8RXA7"/>
<dbReference type="PRO" id="PR:Q8RXA7"/>
<dbReference type="Proteomes" id="UP000006548">
    <property type="component" value="Chromosome 1"/>
</dbReference>
<dbReference type="ExpressionAtlas" id="Q8RXA7">
    <property type="expression patterns" value="baseline and differential"/>
</dbReference>
<dbReference type="GO" id="GO:0030136">
    <property type="term" value="C:clathrin-coated vesicle"/>
    <property type="evidence" value="ECO:0000314"/>
    <property type="project" value="UniProtKB"/>
</dbReference>
<dbReference type="GO" id="GO:0080008">
    <property type="term" value="C:Cul4-RING E3 ubiquitin ligase complex"/>
    <property type="evidence" value="ECO:0000250"/>
    <property type="project" value="TAIR"/>
</dbReference>
<dbReference type="GO" id="GO:0005886">
    <property type="term" value="C:plasma membrane"/>
    <property type="evidence" value="ECO:0000314"/>
    <property type="project" value="UniProtKB"/>
</dbReference>
<dbReference type="GO" id="GO:0000911">
    <property type="term" value="P:cytokinesis by cell plate formation"/>
    <property type="evidence" value="ECO:0000315"/>
    <property type="project" value="TAIR"/>
</dbReference>
<dbReference type="GO" id="GO:0010235">
    <property type="term" value="P:guard mother cell cytokinesis"/>
    <property type="evidence" value="ECO:0000315"/>
    <property type="project" value="TAIR"/>
</dbReference>
<dbReference type="GO" id="GO:0009825">
    <property type="term" value="P:multidimensional cell growth"/>
    <property type="evidence" value="ECO:0000315"/>
    <property type="project" value="TAIR"/>
</dbReference>
<dbReference type="GO" id="GO:0045824">
    <property type="term" value="P:negative regulation of innate immune response"/>
    <property type="evidence" value="ECO:0000315"/>
    <property type="project" value="UniProtKB"/>
</dbReference>
<dbReference type="CDD" id="cd00200">
    <property type="entry name" value="WD40"/>
    <property type="match status" value="1"/>
</dbReference>
<dbReference type="FunFam" id="2.130.10.10:FF:000360">
    <property type="entry name" value="DENN domain and WD repeat-containing protein SCD1"/>
    <property type="match status" value="1"/>
</dbReference>
<dbReference type="FunFam" id="2.130.10.10:FF:000624">
    <property type="entry name" value="DENN domain and WD repeat-containing protein SCD1"/>
    <property type="match status" value="1"/>
</dbReference>
<dbReference type="FunFam" id="3.30.450.200:FF:000006">
    <property type="entry name" value="DENN domain and WD repeat-containing protein SCD1"/>
    <property type="match status" value="1"/>
</dbReference>
<dbReference type="FunFam" id="3.40.50.11500:FF:000007">
    <property type="entry name" value="DENN domain and WD repeat-containing protein SCD1"/>
    <property type="match status" value="1"/>
</dbReference>
<dbReference type="Gene3D" id="3.30.450.200">
    <property type="match status" value="1"/>
</dbReference>
<dbReference type="Gene3D" id="3.40.50.11500">
    <property type="match status" value="1"/>
</dbReference>
<dbReference type="Gene3D" id="2.130.10.10">
    <property type="entry name" value="YVTN repeat-like/Quinoprotein amine dehydrogenase"/>
    <property type="match status" value="2"/>
</dbReference>
<dbReference type="InterPro" id="IPR001194">
    <property type="entry name" value="cDENN_dom"/>
</dbReference>
<dbReference type="InterPro" id="IPR005112">
    <property type="entry name" value="dDENN_dom"/>
</dbReference>
<dbReference type="InterPro" id="IPR043153">
    <property type="entry name" value="DENN_C"/>
</dbReference>
<dbReference type="InterPro" id="IPR051696">
    <property type="entry name" value="DENN_Domain_GEFs"/>
</dbReference>
<dbReference type="InterPro" id="IPR020472">
    <property type="entry name" value="G-protein_beta_WD-40_rep"/>
</dbReference>
<dbReference type="InterPro" id="IPR037516">
    <property type="entry name" value="Tripartite_DENN"/>
</dbReference>
<dbReference type="InterPro" id="IPR005113">
    <property type="entry name" value="uDENN_dom"/>
</dbReference>
<dbReference type="InterPro" id="IPR015943">
    <property type="entry name" value="WD40/YVTN_repeat-like_dom_sf"/>
</dbReference>
<dbReference type="InterPro" id="IPR019775">
    <property type="entry name" value="WD40_repeat_CS"/>
</dbReference>
<dbReference type="InterPro" id="IPR036322">
    <property type="entry name" value="WD40_repeat_dom_sf"/>
</dbReference>
<dbReference type="InterPro" id="IPR001680">
    <property type="entry name" value="WD40_rpt"/>
</dbReference>
<dbReference type="PANTHER" id="PTHR12296:SF21">
    <property type="entry name" value="DENN DOMAIN-CONTAINING PROTEIN 3"/>
    <property type="match status" value="1"/>
</dbReference>
<dbReference type="PANTHER" id="PTHR12296">
    <property type="entry name" value="DENN DOMAIN-CONTAINING PROTEIN 4"/>
    <property type="match status" value="1"/>
</dbReference>
<dbReference type="Pfam" id="PF23761">
    <property type="entry name" value="Beta-prop_DCAF4"/>
    <property type="match status" value="1"/>
</dbReference>
<dbReference type="Pfam" id="PF02141">
    <property type="entry name" value="DENN"/>
    <property type="match status" value="1"/>
</dbReference>
<dbReference type="Pfam" id="PF03456">
    <property type="entry name" value="uDENN"/>
    <property type="match status" value="1"/>
</dbReference>
<dbReference type="Pfam" id="PF00400">
    <property type="entry name" value="WD40"/>
    <property type="match status" value="4"/>
</dbReference>
<dbReference type="PRINTS" id="PR00320">
    <property type="entry name" value="GPROTEINBRPT"/>
</dbReference>
<dbReference type="SMART" id="SM00801">
    <property type="entry name" value="dDENN"/>
    <property type="match status" value="1"/>
</dbReference>
<dbReference type="SMART" id="SM00799">
    <property type="entry name" value="DENN"/>
    <property type="match status" value="1"/>
</dbReference>
<dbReference type="SMART" id="SM00800">
    <property type="entry name" value="uDENN"/>
    <property type="match status" value="1"/>
</dbReference>
<dbReference type="SMART" id="SM00320">
    <property type="entry name" value="WD40"/>
    <property type="match status" value="8"/>
</dbReference>
<dbReference type="SUPFAM" id="SSF50978">
    <property type="entry name" value="WD40 repeat-like"/>
    <property type="match status" value="1"/>
</dbReference>
<dbReference type="PROSITE" id="PS50211">
    <property type="entry name" value="DENN"/>
    <property type="match status" value="1"/>
</dbReference>
<dbReference type="PROSITE" id="PS00678">
    <property type="entry name" value="WD_REPEATS_1"/>
    <property type="match status" value="4"/>
</dbReference>
<dbReference type="PROSITE" id="PS50082">
    <property type="entry name" value="WD_REPEATS_2"/>
    <property type="match status" value="5"/>
</dbReference>
<dbReference type="PROSITE" id="PS50294">
    <property type="entry name" value="WD_REPEATS_REGION"/>
    <property type="match status" value="1"/>
</dbReference>
<comment type="function">
    <text evidence="4 5 6">Involved in growth and development through its role in cytokinesis and polarized cell expansion (PubMed:12874123). Required for plasma membrane internalization. May function in clathrin-mediated membrane trafficking, including plasma membrane endocytosis, essential to both cytokinesis and cell expansion (PubMed:24179130). Acts as a negative regulator of basal resistance against bacteria (PubMed:20472560).</text>
</comment>
<comment type="subunit">
    <text evidence="5">Interacts with FLS2.</text>
</comment>
<comment type="subcellular location">
    <subcellularLocation>
        <location evidence="6">Cell membrane</location>
        <topology evidence="6">Peripheral membrane protein</topology>
    </subcellularLocation>
    <subcellularLocation>
        <location evidence="6">Cytoplasmic vesicle</location>
        <location evidence="6">Clathrin-coated vesicle</location>
    </subcellularLocation>
    <text evidence="6">Colocalized with clathrin at the plasma membrane.</text>
</comment>
<comment type="alternative products">
    <event type="alternative splicing"/>
    <isoform>
        <id>Q8RXA7-1</id>
        <name>1</name>
        <sequence type="displayed"/>
    </isoform>
    <text evidence="8">A number of isoforms are reduced. According to EST sequences.</text>
</comment>
<comment type="tissue specificity">
    <text evidence="4">Expressed in roots, rosette and cauline leaves, buds and flowers.</text>
</comment>
<comment type="disruption phenotype">
    <text evidence="4">Defects in seedling development, root elongation, leaf expansion, flower morphogenesis and fertility due to defective cytokinesis in epidermal cells.</text>
</comment>
<comment type="sequence caution" evidence="8">
    <conflict type="erroneous gene model prediction">
        <sequence resource="EMBL-CDS" id="AAF69702"/>
    </conflict>
    <text>Was originally thought to correspond to two different genes.</text>
</comment>
<comment type="sequence caution" evidence="8">
    <conflict type="erroneous gene model prediction">
        <sequence resource="EMBL-CDS" id="AAF69703"/>
    </conflict>
    <text>Was originally thought to correspond to two different genes.</text>
</comment>
<protein>
    <recommendedName>
        <fullName evidence="8">DENN domain and WD repeat-containing protein SCD1</fullName>
    </recommendedName>
    <alternativeName>
        <fullName evidence="7">Protein STOMATAL CYTOKINESIS DEFECTIVE 1</fullName>
    </alternativeName>
</protein>
<accession>Q8RXA7</accession>
<accession>Q9M9A6</accession>
<accession>Q9M9A7</accession>
<organism>
    <name type="scientific">Arabidopsis thaliana</name>
    <name type="common">Mouse-ear cress</name>
    <dbReference type="NCBI Taxonomy" id="3702"/>
    <lineage>
        <taxon>Eukaryota</taxon>
        <taxon>Viridiplantae</taxon>
        <taxon>Streptophyta</taxon>
        <taxon>Embryophyta</taxon>
        <taxon>Tracheophyta</taxon>
        <taxon>Spermatophyta</taxon>
        <taxon>Magnoliopsida</taxon>
        <taxon>eudicotyledons</taxon>
        <taxon>Gunneridae</taxon>
        <taxon>Pentapetalae</taxon>
        <taxon>rosids</taxon>
        <taxon>malvids</taxon>
        <taxon>Brassicales</taxon>
        <taxon>Brassicaceae</taxon>
        <taxon>Camelineae</taxon>
        <taxon>Arabidopsis</taxon>
    </lineage>
</organism>
<reference key="1">
    <citation type="journal article" date="2003" name="Development">
        <title>SCD1 is required for cytokinesis and polarized cell expansion in Arabidopsis thaliana [corrected.</title>
        <authorList>
            <person name="Falbel T.G."/>
            <person name="Koch L.M."/>
            <person name="Nadeau J.A."/>
            <person name="Segui-Simarro J.M."/>
            <person name="Sack F.D."/>
            <person name="Bednarek S.Y."/>
        </authorList>
    </citation>
    <scope>NUCLEOTIDE SEQUENCE [MRNA]</scope>
    <scope>FUNCTION</scope>
    <scope>TISSUE SPECIFICITY</scope>
    <scope>MUTAGENESIS OF SER-131</scope>
    <scope>DISRUPTION PHENOTYPE</scope>
    <source>
        <strain>cv. Columbia</strain>
    </source>
</reference>
<reference key="2">
    <citation type="journal article" date="2000" name="Nature">
        <title>Sequence and analysis of chromosome 1 of the plant Arabidopsis thaliana.</title>
        <authorList>
            <person name="Theologis A."/>
            <person name="Ecker J.R."/>
            <person name="Palm C.J."/>
            <person name="Federspiel N.A."/>
            <person name="Kaul S."/>
            <person name="White O."/>
            <person name="Alonso J."/>
            <person name="Altafi H."/>
            <person name="Araujo R."/>
            <person name="Bowman C.L."/>
            <person name="Brooks S.Y."/>
            <person name="Buehler E."/>
            <person name="Chan A."/>
            <person name="Chao Q."/>
            <person name="Chen H."/>
            <person name="Cheuk R.F."/>
            <person name="Chin C.W."/>
            <person name="Chung M.K."/>
            <person name="Conn L."/>
            <person name="Conway A.B."/>
            <person name="Conway A.R."/>
            <person name="Creasy T.H."/>
            <person name="Dewar K."/>
            <person name="Dunn P."/>
            <person name="Etgu P."/>
            <person name="Feldblyum T.V."/>
            <person name="Feng J.-D."/>
            <person name="Fong B."/>
            <person name="Fujii C.Y."/>
            <person name="Gill J.E."/>
            <person name="Goldsmith A.D."/>
            <person name="Haas B."/>
            <person name="Hansen N.F."/>
            <person name="Hughes B."/>
            <person name="Huizar L."/>
            <person name="Hunter J.L."/>
            <person name="Jenkins J."/>
            <person name="Johnson-Hopson C."/>
            <person name="Khan S."/>
            <person name="Khaykin E."/>
            <person name="Kim C.J."/>
            <person name="Koo H.L."/>
            <person name="Kremenetskaia I."/>
            <person name="Kurtz D.B."/>
            <person name="Kwan A."/>
            <person name="Lam B."/>
            <person name="Langin-Hooper S."/>
            <person name="Lee A."/>
            <person name="Lee J.M."/>
            <person name="Lenz C.A."/>
            <person name="Li J.H."/>
            <person name="Li Y.-P."/>
            <person name="Lin X."/>
            <person name="Liu S.X."/>
            <person name="Liu Z.A."/>
            <person name="Luros J.S."/>
            <person name="Maiti R."/>
            <person name="Marziali A."/>
            <person name="Militscher J."/>
            <person name="Miranda M."/>
            <person name="Nguyen M."/>
            <person name="Nierman W.C."/>
            <person name="Osborne B.I."/>
            <person name="Pai G."/>
            <person name="Peterson J."/>
            <person name="Pham P.K."/>
            <person name="Rizzo M."/>
            <person name="Rooney T."/>
            <person name="Rowley D."/>
            <person name="Sakano H."/>
            <person name="Salzberg S.L."/>
            <person name="Schwartz J.R."/>
            <person name="Shinn P."/>
            <person name="Southwick A.M."/>
            <person name="Sun H."/>
            <person name="Tallon L.J."/>
            <person name="Tambunga G."/>
            <person name="Toriumi M.J."/>
            <person name="Town C.D."/>
            <person name="Utterback T."/>
            <person name="Van Aken S."/>
            <person name="Vaysberg M."/>
            <person name="Vysotskaia V.S."/>
            <person name="Walker M."/>
            <person name="Wu D."/>
            <person name="Yu G."/>
            <person name="Fraser C.M."/>
            <person name="Venter J.C."/>
            <person name="Davis R.W."/>
        </authorList>
    </citation>
    <scope>NUCLEOTIDE SEQUENCE [LARGE SCALE GENOMIC DNA]</scope>
    <source>
        <strain>cv. Columbia</strain>
    </source>
</reference>
<reference key="3">
    <citation type="journal article" date="2017" name="Plant J.">
        <title>Araport11: a complete reannotation of the Arabidopsis thaliana reference genome.</title>
        <authorList>
            <person name="Cheng C.Y."/>
            <person name="Krishnakumar V."/>
            <person name="Chan A.P."/>
            <person name="Thibaud-Nissen F."/>
            <person name="Schobel S."/>
            <person name="Town C.D."/>
        </authorList>
    </citation>
    <scope>GENOME REANNOTATION</scope>
    <source>
        <strain>cv. Columbia</strain>
    </source>
</reference>
<reference key="4">
    <citation type="journal article" date="2010" name="J. Biol. Chem.">
        <title>Novel functions of Stomatal Cytokinesis-Defective 1 (SCD1) in innate immune responses against bacteria.</title>
        <authorList>
            <person name="Korasick D.A."/>
            <person name="McMichael C."/>
            <person name="Walker K.A."/>
            <person name="Anderson J.C."/>
            <person name="Bednarek S.Y."/>
            <person name="Heese A."/>
        </authorList>
    </citation>
    <scope>IDENTIFICATION BY MASS SPECTROMETRY</scope>
    <scope>FUNCTION</scope>
    <scope>INTERACTION WITH FLS2</scope>
</reference>
<reference key="5">
    <citation type="journal article" date="2013" name="Plant Cell">
        <title>Mediation of clathrin-dependent trafficking during cytokinesis and cell expansion by Arabidopsis stomatal cytokinesis defective proteins.</title>
        <authorList>
            <person name="McMichael C.M."/>
            <person name="Reynolds G.D."/>
            <person name="Koch L.M."/>
            <person name="Wang C."/>
            <person name="Jiang N."/>
            <person name="Nadeau J."/>
            <person name="Sack F.D."/>
            <person name="Gelderman M.B."/>
            <person name="Pan J."/>
            <person name="Bednarek S.Y."/>
        </authorList>
    </citation>
    <scope>FUNCTION</scope>
    <scope>SUBCELLULAR LOCATION</scope>
</reference>
<feature type="chain" id="PRO_0000431668" description="DENN domain and WD repeat-containing protein SCD1">
    <location>
        <begin position="1"/>
        <end position="1187"/>
    </location>
</feature>
<feature type="domain" description="uDENN" evidence="2">
    <location>
        <begin position="19"/>
        <end position="179"/>
    </location>
</feature>
<feature type="domain" description="cDENN" evidence="2">
    <location>
        <begin position="199"/>
        <end position="330"/>
    </location>
</feature>
<feature type="domain" description="dDENN" evidence="2">
    <location>
        <begin position="332"/>
        <end position="437"/>
    </location>
</feature>
<feature type="repeat" description="WD 1" evidence="1">
    <location>
        <begin position="841"/>
        <end position="892"/>
    </location>
</feature>
<feature type="repeat" description="WD 2" evidence="1">
    <location>
        <begin position="897"/>
        <end position="934"/>
    </location>
</feature>
<feature type="repeat" description="WD 3" evidence="1">
    <location>
        <begin position="937"/>
        <end position="975"/>
    </location>
</feature>
<feature type="repeat" description="WD 4" evidence="1">
    <location>
        <begin position="978"/>
        <end position="1017"/>
    </location>
</feature>
<feature type="repeat" description="WD 5" evidence="1">
    <location>
        <begin position="1020"/>
        <end position="1057"/>
    </location>
</feature>
<feature type="repeat" description="WD 6" evidence="1">
    <location>
        <begin position="1060"/>
        <end position="1099"/>
    </location>
</feature>
<feature type="repeat" description="WD 7" evidence="1">
    <location>
        <begin position="1104"/>
        <end position="1141"/>
    </location>
</feature>
<feature type="repeat" description="WD 8" evidence="1">
    <location>
        <begin position="1152"/>
        <end position="1187"/>
    </location>
</feature>
<feature type="region of interest" description="Disordered" evidence="3">
    <location>
        <begin position="508"/>
        <end position="536"/>
    </location>
</feature>
<feature type="region of interest" description="Disordered" evidence="3">
    <location>
        <begin position="765"/>
        <end position="793"/>
    </location>
</feature>
<feature type="compositionally biased region" description="Basic and acidic residues" evidence="3">
    <location>
        <begin position="526"/>
        <end position="536"/>
    </location>
</feature>
<feature type="compositionally biased region" description="Polar residues" evidence="3">
    <location>
        <begin position="779"/>
        <end position="793"/>
    </location>
</feature>
<feature type="mutagenesis site" description="In scd1-1; temperature sensitive mutant with normal growth at the permissive temperature of 16 degrees Celsius and growth defects and sterility due to defective cytokinesis in guard cells and leaf epidermal cells at 22 degrees Celsius." evidence="4">
    <original>S</original>
    <variation>F</variation>
    <location>
        <position position="131"/>
    </location>
</feature>
<proteinExistence type="evidence at protein level"/>
<name>SCD1_ARATH</name>
<evidence type="ECO:0000255" key="1"/>
<evidence type="ECO:0000255" key="2">
    <source>
        <dbReference type="PROSITE-ProRule" id="PRU00304"/>
    </source>
</evidence>
<evidence type="ECO:0000256" key="3">
    <source>
        <dbReference type="SAM" id="MobiDB-lite"/>
    </source>
</evidence>
<evidence type="ECO:0000269" key="4">
    <source>
    </source>
</evidence>
<evidence type="ECO:0000269" key="5">
    <source>
    </source>
</evidence>
<evidence type="ECO:0000269" key="6">
    <source>
    </source>
</evidence>
<evidence type="ECO:0000303" key="7">
    <source>
    </source>
</evidence>
<evidence type="ECO:0000305" key="8"/>
<evidence type="ECO:0000312" key="9">
    <source>
        <dbReference type="Araport" id="AT1G49040"/>
    </source>
</evidence>
<evidence type="ECO:0000312" key="10">
    <source>
        <dbReference type="EMBL" id="AAF69702.1"/>
    </source>
</evidence>
<evidence type="ECO:0000312" key="11">
    <source>
        <dbReference type="EMBL" id="AAF69703.1"/>
    </source>
</evidence>